<evidence type="ECO:0000255" key="1">
    <source>
        <dbReference type="HAMAP-Rule" id="MF_00215"/>
    </source>
</evidence>
<name>COAA_LISMC</name>
<gene>
    <name evidence="1" type="primary">coaA</name>
    <name type="ordered locus">Lm4b_00942</name>
</gene>
<comment type="catalytic activity">
    <reaction evidence="1">
        <text>(R)-pantothenate + ATP = (R)-4'-phosphopantothenate + ADP + H(+)</text>
        <dbReference type="Rhea" id="RHEA:16373"/>
        <dbReference type="ChEBI" id="CHEBI:10986"/>
        <dbReference type="ChEBI" id="CHEBI:15378"/>
        <dbReference type="ChEBI" id="CHEBI:29032"/>
        <dbReference type="ChEBI" id="CHEBI:30616"/>
        <dbReference type="ChEBI" id="CHEBI:456216"/>
        <dbReference type="EC" id="2.7.1.33"/>
    </reaction>
</comment>
<comment type="pathway">
    <text evidence="1">Cofactor biosynthesis; coenzyme A biosynthesis; CoA from (R)-pantothenate: step 1/5.</text>
</comment>
<comment type="subcellular location">
    <subcellularLocation>
        <location evidence="1">Cytoplasm</location>
    </subcellularLocation>
</comment>
<comment type="similarity">
    <text evidence="1">Belongs to the prokaryotic pantothenate kinase family.</text>
</comment>
<organism>
    <name type="scientific">Listeria monocytogenes serotype 4b (strain CLIP80459)</name>
    <dbReference type="NCBI Taxonomy" id="568819"/>
    <lineage>
        <taxon>Bacteria</taxon>
        <taxon>Bacillati</taxon>
        <taxon>Bacillota</taxon>
        <taxon>Bacilli</taxon>
        <taxon>Bacillales</taxon>
        <taxon>Listeriaceae</taxon>
        <taxon>Listeria</taxon>
    </lineage>
</organism>
<dbReference type="EC" id="2.7.1.33" evidence="1"/>
<dbReference type="EMBL" id="FM242711">
    <property type="protein sequence ID" value="CAS04710.1"/>
    <property type="molecule type" value="Genomic_DNA"/>
</dbReference>
<dbReference type="RefSeq" id="WP_003721490.1">
    <property type="nucleotide sequence ID" value="NC_012488.1"/>
</dbReference>
<dbReference type="SMR" id="C1L1J5"/>
<dbReference type="KEGG" id="lmc:Lm4b_00942"/>
<dbReference type="HOGENOM" id="CLU_053818_1_1_9"/>
<dbReference type="UniPathway" id="UPA00241">
    <property type="reaction ID" value="UER00352"/>
</dbReference>
<dbReference type="GO" id="GO:0005737">
    <property type="term" value="C:cytoplasm"/>
    <property type="evidence" value="ECO:0007669"/>
    <property type="project" value="UniProtKB-SubCell"/>
</dbReference>
<dbReference type="GO" id="GO:0005524">
    <property type="term" value="F:ATP binding"/>
    <property type="evidence" value="ECO:0007669"/>
    <property type="project" value="UniProtKB-UniRule"/>
</dbReference>
<dbReference type="GO" id="GO:0004594">
    <property type="term" value="F:pantothenate kinase activity"/>
    <property type="evidence" value="ECO:0007669"/>
    <property type="project" value="UniProtKB-UniRule"/>
</dbReference>
<dbReference type="GO" id="GO:0015937">
    <property type="term" value="P:coenzyme A biosynthetic process"/>
    <property type="evidence" value="ECO:0007669"/>
    <property type="project" value="UniProtKB-UniRule"/>
</dbReference>
<dbReference type="CDD" id="cd02025">
    <property type="entry name" value="PanK"/>
    <property type="match status" value="1"/>
</dbReference>
<dbReference type="FunFam" id="3.40.50.300:FF:001878">
    <property type="entry name" value="Pantothenate kinase"/>
    <property type="match status" value="1"/>
</dbReference>
<dbReference type="Gene3D" id="3.40.50.300">
    <property type="entry name" value="P-loop containing nucleotide triphosphate hydrolases"/>
    <property type="match status" value="1"/>
</dbReference>
<dbReference type="HAMAP" id="MF_00215">
    <property type="entry name" value="Pantothen_kinase_1"/>
    <property type="match status" value="1"/>
</dbReference>
<dbReference type="InterPro" id="IPR027417">
    <property type="entry name" value="P-loop_NTPase"/>
</dbReference>
<dbReference type="InterPro" id="IPR004566">
    <property type="entry name" value="PanK"/>
</dbReference>
<dbReference type="InterPro" id="IPR006083">
    <property type="entry name" value="PRK/URK"/>
</dbReference>
<dbReference type="NCBIfam" id="TIGR00554">
    <property type="entry name" value="panK_bact"/>
    <property type="match status" value="1"/>
</dbReference>
<dbReference type="PANTHER" id="PTHR10285">
    <property type="entry name" value="URIDINE KINASE"/>
    <property type="match status" value="1"/>
</dbReference>
<dbReference type="Pfam" id="PF00485">
    <property type="entry name" value="PRK"/>
    <property type="match status" value="1"/>
</dbReference>
<dbReference type="PIRSF" id="PIRSF000545">
    <property type="entry name" value="Pantothenate_kin"/>
    <property type="match status" value="1"/>
</dbReference>
<dbReference type="SUPFAM" id="SSF52540">
    <property type="entry name" value="P-loop containing nucleoside triphosphate hydrolases"/>
    <property type="match status" value="1"/>
</dbReference>
<reference key="1">
    <citation type="journal article" date="2012" name="BMC Genomics">
        <title>Comparative genomics and transcriptomics of lineages I, II, and III strains of Listeria monocytogenes.</title>
        <authorList>
            <person name="Hain T."/>
            <person name="Ghai R."/>
            <person name="Billion A."/>
            <person name="Kuenne C.T."/>
            <person name="Steinweg C."/>
            <person name="Izar B."/>
            <person name="Mohamed W."/>
            <person name="Mraheil M."/>
            <person name="Domann E."/>
            <person name="Schaffrath S."/>
            <person name="Karst U."/>
            <person name="Goesmann A."/>
            <person name="Oehm S."/>
            <person name="Puhler A."/>
            <person name="Merkl R."/>
            <person name="Vorwerk S."/>
            <person name="Glaser P."/>
            <person name="Garrido P."/>
            <person name="Rusniok C."/>
            <person name="Buchrieser C."/>
            <person name="Goebel W."/>
            <person name="Chakraborty T."/>
        </authorList>
    </citation>
    <scope>NUCLEOTIDE SEQUENCE [LARGE SCALE GENOMIC DNA]</scope>
    <source>
        <strain>CLIP80459</strain>
    </source>
</reference>
<protein>
    <recommendedName>
        <fullName evidence="1">Pantothenate kinase</fullName>
        <ecNumber evidence="1">2.7.1.33</ecNumber>
    </recommendedName>
    <alternativeName>
        <fullName evidence="1">Pantothenic acid kinase</fullName>
    </alternativeName>
</protein>
<proteinExistence type="inferred from homology"/>
<accession>C1L1J5</accession>
<feature type="chain" id="PRO_1000204217" description="Pantothenate kinase">
    <location>
        <begin position="1"/>
        <end position="306"/>
    </location>
</feature>
<feature type="binding site" evidence="1">
    <location>
        <begin position="90"/>
        <end position="97"/>
    </location>
    <ligand>
        <name>ATP</name>
        <dbReference type="ChEBI" id="CHEBI:30616"/>
    </ligand>
</feature>
<keyword id="KW-0067">ATP-binding</keyword>
<keyword id="KW-0173">Coenzyme A biosynthesis</keyword>
<keyword id="KW-0963">Cytoplasm</keyword>
<keyword id="KW-0418">Kinase</keyword>
<keyword id="KW-0547">Nucleotide-binding</keyword>
<keyword id="KW-0808">Transferase</keyword>
<sequence length="306" mass="36110">MNDYNHYFHFPREEWRKLEVSKDQILTAEELEEIRGLNDRISLQDISEIYLPLIKLIAIQYHEAIFIHGEKMEYLKKKESRAPFIIALAGSVAVGKSTTARVFKLMLDRWFSKTRQVELVTTDGFLYPNKVLEERGIMDKKGFPESYDRDRFAKFLTDLKANKEDVEIPLYSHFTYDVLDETRVIHNPDIVIIEGINVLQADQHESLFPSDFFDFSVYMDANEADIKKWYLERFFMLRETAFQDESSYFHPYTKISKQEAETFALGVWDTINGVNLKENIEKTKYRADLVLQKGTDHLISDIYLRK</sequence>